<gene>
    <name evidence="1" type="primary">viaA</name>
    <name type="ordered locus">SFV_3771</name>
</gene>
<proteinExistence type="inferred from homology"/>
<name>VIAA_SHIF8</name>
<reference key="1">
    <citation type="journal article" date="2006" name="BMC Genomics">
        <title>Complete genome sequence of Shigella flexneri 5b and comparison with Shigella flexneri 2a.</title>
        <authorList>
            <person name="Nie H."/>
            <person name="Yang F."/>
            <person name="Zhang X."/>
            <person name="Yang J."/>
            <person name="Chen L."/>
            <person name="Wang J."/>
            <person name="Xiong Z."/>
            <person name="Peng J."/>
            <person name="Sun L."/>
            <person name="Dong J."/>
            <person name="Xue Y."/>
            <person name="Xu X."/>
            <person name="Chen S."/>
            <person name="Yao Z."/>
            <person name="Shen Y."/>
            <person name="Jin Q."/>
        </authorList>
    </citation>
    <scope>NUCLEOTIDE SEQUENCE [LARGE SCALE GENOMIC DNA]</scope>
    <source>
        <strain>8401</strain>
    </source>
</reference>
<keyword id="KW-0143">Chaperone</keyword>
<keyword id="KW-0963">Cytoplasm</keyword>
<protein>
    <recommendedName>
        <fullName evidence="1">Regulatory protein ViaA</fullName>
    </recommendedName>
    <alternativeName>
        <fullName evidence="1">VWA interacting with AAA+ ATPase</fullName>
    </alternativeName>
</protein>
<organism>
    <name type="scientific">Shigella flexneri serotype 5b (strain 8401)</name>
    <dbReference type="NCBI Taxonomy" id="373384"/>
    <lineage>
        <taxon>Bacteria</taxon>
        <taxon>Pseudomonadati</taxon>
        <taxon>Pseudomonadota</taxon>
        <taxon>Gammaproteobacteria</taxon>
        <taxon>Enterobacterales</taxon>
        <taxon>Enterobacteriaceae</taxon>
        <taxon>Shigella</taxon>
    </lineage>
</organism>
<sequence length="483" mass="55941">MLTLDTLNVMLAVSEEGLIEEMIIALLASPQLAVFFEKFPRLKAAITDDVPRWREALRSRLKDARVPPELTEEVMCYQQSQLLSTPQFIVQLPQILDLLHRLNSPWAEQARQLVDANSTITSALHTLFLQRWRLSLIVQATTLNQQLLEEEREQLLSEVQERMTLSGQLEPILADNNTAAGRLWDMSAGQLKRGDYQFIVKYGEFLNEQPELKRLAEQLGRSREAKSIPRNDAQMETFRTMVREPATVPEQVDGLQQSDDILRLLPPELATLGITELEYEFYRRLVEKQLLTYRLHGESWREKVLERPVVHKDYDEQPRGPFIVCVDTSGSMGGFNEQCAKAFCLALMRIALAENRRCYIMLFSTEIVRYELSGPQGIEQAIRFLSQQFRGGTDLASCFRAIMERLQSREWFDADAVVISDFIAQRLPDDVTSKVKELQRVHQHRFHAVAMSAHGKPGIMRIFDHIWRFDTGMRSRLLRRWRR</sequence>
<comment type="function">
    <text evidence="1">Component of the RavA-ViaA chaperone complex, which may act on the membrane to optimize the function of some of the respiratory chains. ViaA stimulates the ATPase activity of RavA.</text>
</comment>
<comment type="subunit">
    <text evidence="1">Homodimer. Interacts with RavA.</text>
</comment>
<comment type="subcellular location">
    <subcellularLocation>
        <location evidence="1">Cytoplasm</location>
    </subcellularLocation>
</comment>
<comment type="similarity">
    <text evidence="1">Belongs to the ViaA family.</text>
</comment>
<evidence type="ECO:0000255" key="1">
    <source>
        <dbReference type="HAMAP-Rule" id="MF_01626"/>
    </source>
</evidence>
<accession>Q0SYT1</accession>
<feature type="chain" id="PRO_1000069610" description="Regulatory protein ViaA">
    <location>
        <begin position="1"/>
        <end position="483"/>
    </location>
</feature>
<dbReference type="EMBL" id="CP000266">
    <property type="protein sequence ID" value="ABF05784.1"/>
    <property type="molecule type" value="Genomic_DNA"/>
</dbReference>
<dbReference type="RefSeq" id="WP_000956623.1">
    <property type="nucleotide sequence ID" value="NC_008258.1"/>
</dbReference>
<dbReference type="SMR" id="Q0SYT1"/>
<dbReference type="KEGG" id="sfv:SFV_3771"/>
<dbReference type="HOGENOM" id="CLU_022130_0_0_6"/>
<dbReference type="Proteomes" id="UP000000659">
    <property type="component" value="Chromosome"/>
</dbReference>
<dbReference type="GO" id="GO:0005829">
    <property type="term" value="C:cytosol"/>
    <property type="evidence" value="ECO:0007669"/>
    <property type="project" value="TreeGrafter"/>
</dbReference>
<dbReference type="CDD" id="cd01462">
    <property type="entry name" value="VWA_YIEM_type"/>
    <property type="match status" value="1"/>
</dbReference>
<dbReference type="Gene3D" id="3.40.50.410">
    <property type="entry name" value="von Willebrand factor, type A domain"/>
    <property type="match status" value="1"/>
</dbReference>
<dbReference type="HAMAP" id="MF_01626">
    <property type="entry name" value="ViaA"/>
    <property type="match status" value="1"/>
</dbReference>
<dbReference type="InterPro" id="IPR008912">
    <property type="entry name" value="Uncharacterised_CoxE"/>
</dbReference>
<dbReference type="InterPro" id="IPR023481">
    <property type="entry name" value="Uncharacterised_ViaA"/>
</dbReference>
<dbReference type="InterPro" id="IPR002035">
    <property type="entry name" value="VWF_A"/>
</dbReference>
<dbReference type="InterPro" id="IPR036465">
    <property type="entry name" value="vWFA_dom_sf"/>
</dbReference>
<dbReference type="NCBIfam" id="NF008230">
    <property type="entry name" value="PRK10997.1"/>
    <property type="match status" value="1"/>
</dbReference>
<dbReference type="PANTHER" id="PTHR36846">
    <property type="entry name" value="PROTEIN VIAA"/>
    <property type="match status" value="1"/>
</dbReference>
<dbReference type="PANTHER" id="PTHR36846:SF1">
    <property type="entry name" value="PROTEIN VIAA"/>
    <property type="match status" value="1"/>
</dbReference>
<dbReference type="Pfam" id="PF05762">
    <property type="entry name" value="VWA_CoxE"/>
    <property type="match status" value="1"/>
</dbReference>
<dbReference type="SMART" id="SM00327">
    <property type="entry name" value="VWA"/>
    <property type="match status" value="1"/>
</dbReference>
<dbReference type="SUPFAM" id="SSF53300">
    <property type="entry name" value="vWA-like"/>
    <property type="match status" value="1"/>
</dbReference>